<reference key="1">
    <citation type="journal article" date="2011" name="Appl. Environ. Microbiol.">
        <title>Genomic potential of Marinobacter aquaeolei, a biogeochemical 'opportunitroph'.</title>
        <authorList>
            <person name="Singer E."/>
            <person name="Webb E.A."/>
            <person name="Nelson W.C."/>
            <person name="Heidelberg J.F."/>
            <person name="Ivanova N."/>
            <person name="Pati A."/>
            <person name="Edwards K.J."/>
        </authorList>
    </citation>
    <scope>NUCLEOTIDE SEQUENCE [LARGE SCALE GENOMIC DNA]</scope>
    <source>
        <strain>ATCC 700491 / DSM 11845 / VT8</strain>
    </source>
</reference>
<accession>A1U501</accession>
<organism>
    <name type="scientific">Marinobacter nauticus (strain ATCC 700491 / DSM 11845 / VT8)</name>
    <name type="common">Marinobacter aquaeolei</name>
    <dbReference type="NCBI Taxonomy" id="351348"/>
    <lineage>
        <taxon>Bacteria</taxon>
        <taxon>Pseudomonadati</taxon>
        <taxon>Pseudomonadota</taxon>
        <taxon>Gammaproteobacteria</taxon>
        <taxon>Pseudomonadales</taxon>
        <taxon>Marinobacteraceae</taxon>
        <taxon>Marinobacter</taxon>
    </lineage>
</organism>
<evidence type="ECO:0000255" key="1">
    <source>
        <dbReference type="HAMAP-Rule" id="MF_01384"/>
    </source>
</evidence>
<name>URED_MARN8</name>
<protein>
    <recommendedName>
        <fullName evidence="1">Urease accessory protein UreD</fullName>
    </recommendedName>
</protein>
<proteinExistence type="inferred from homology"/>
<comment type="function">
    <text evidence="1">Required for maturation of urease via the functional incorporation of the urease nickel metallocenter.</text>
</comment>
<comment type="subunit">
    <text evidence="1">UreD, UreF and UreG form a complex that acts as a GTP-hydrolysis-dependent molecular chaperone, activating the urease apoprotein by helping to assemble the nickel containing metallocenter of UreC. The UreE protein probably delivers the nickel.</text>
</comment>
<comment type="subcellular location">
    <subcellularLocation>
        <location evidence="1">Cytoplasm</location>
    </subcellularLocation>
</comment>
<comment type="similarity">
    <text evidence="1">Belongs to the UreD family.</text>
</comment>
<gene>
    <name evidence="1" type="primary">ureD</name>
    <name type="ordered locus">Maqu_2996</name>
</gene>
<feature type="chain" id="PRO_0000340460" description="Urease accessory protein UreD">
    <location>
        <begin position="1"/>
        <end position="298"/>
    </location>
</feature>
<dbReference type="EMBL" id="CP000514">
    <property type="protein sequence ID" value="ABM20070.1"/>
    <property type="molecule type" value="Genomic_DNA"/>
</dbReference>
<dbReference type="RefSeq" id="WP_011786438.1">
    <property type="nucleotide sequence ID" value="NC_008740.1"/>
</dbReference>
<dbReference type="SMR" id="A1U501"/>
<dbReference type="STRING" id="351348.Maqu_2996"/>
<dbReference type="KEGG" id="maq:Maqu_2996"/>
<dbReference type="eggNOG" id="COG0829">
    <property type="taxonomic scope" value="Bacteria"/>
</dbReference>
<dbReference type="HOGENOM" id="CLU_056339_0_0_6"/>
<dbReference type="OrthoDB" id="9798842at2"/>
<dbReference type="Proteomes" id="UP000000998">
    <property type="component" value="Chromosome"/>
</dbReference>
<dbReference type="GO" id="GO:0005737">
    <property type="term" value="C:cytoplasm"/>
    <property type="evidence" value="ECO:0007669"/>
    <property type="project" value="UniProtKB-SubCell"/>
</dbReference>
<dbReference type="GO" id="GO:0016151">
    <property type="term" value="F:nickel cation binding"/>
    <property type="evidence" value="ECO:0007669"/>
    <property type="project" value="UniProtKB-UniRule"/>
</dbReference>
<dbReference type="HAMAP" id="MF_01384">
    <property type="entry name" value="UreD"/>
    <property type="match status" value="1"/>
</dbReference>
<dbReference type="InterPro" id="IPR002669">
    <property type="entry name" value="UreD"/>
</dbReference>
<dbReference type="PANTHER" id="PTHR33643">
    <property type="entry name" value="UREASE ACCESSORY PROTEIN D"/>
    <property type="match status" value="1"/>
</dbReference>
<dbReference type="PANTHER" id="PTHR33643:SF1">
    <property type="entry name" value="UREASE ACCESSORY PROTEIN D"/>
    <property type="match status" value="1"/>
</dbReference>
<dbReference type="Pfam" id="PF01774">
    <property type="entry name" value="UreD"/>
    <property type="match status" value="1"/>
</dbReference>
<sequence length="298" mass="33168">MTAYQAIDRHASGHRFDTERRWAAALELGFEARAESEPTPVTRLVRRRHHGPLRVQRPFYPEGKTGCCHVYLLHPPGGLVSGDELRIEATVAEGGHALLTTPAAAKLYKADSHGVAWGQHTRLQVAKDAILEYLPQETIAFDGSRGLQTTTIELATGARTLGWEVLALGRPASDLPFATGALEQRFHLSLDGQPLWLERQLLDPKHRRFNGPWGQGGATVQATLWAVGLDDEAAAIDVLRAQLPDHNRWAVTRRRGVLLLRYLGTERNEAWALCEQAWHLLRPMLASVPAHTPRIWLT</sequence>
<keyword id="KW-0143">Chaperone</keyword>
<keyword id="KW-0963">Cytoplasm</keyword>
<keyword id="KW-0996">Nickel insertion</keyword>